<accession>Q042K5</accession>
<proteinExistence type="inferred from homology"/>
<organism>
    <name type="scientific">Lactobacillus gasseri (strain ATCC 33323 / DSM 20243 / BCRC 14619 / CIP 102991 / JCM 1131 / KCTC 3163 / NCIMB 11718 / NCTC 13722 / AM63)</name>
    <dbReference type="NCBI Taxonomy" id="324831"/>
    <lineage>
        <taxon>Bacteria</taxon>
        <taxon>Bacillati</taxon>
        <taxon>Bacillota</taxon>
        <taxon>Bacilli</taxon>
        <taxon>Lactobacillales</taxon>
        <taxon>Lactobacillaceae</taxon>
        <taxon>Lactobacillus</taxon>
    </lineage>
</organism>
<keyword id="KW-0963">Cytoplasm</keyword>
<keyword id="KW-0488">Methylation</keyword>
<keyword id="KW-0648">Protein biosynthesis</keyword>
<name>RF1_LACGA</name>
<comment type="function">
    <text evidence="1">Peptide chain release factor 1 directs the termination of translation in response to the peptide chain termination codons UAG and UAA.</text>
</comment>
<comment type="subcellular location">
    <subcellularLocation>
        <location evidence="1">Cytoplasm</location>
    </subcellularLocation>
</comment>
<comment type="PTM">
    <text evidence="1">Methylated by PrmC. Methylation increases the termination efficiency of RF1.</text>
</comment>
<comment type="similarity">
    <text evidence="1">Belongs to the prokaryotic/mitochondrial release factor family.</text>
</comment>
<feature type="chain" id="PRO_1000004903" description="Peptide chain release factor 1">
    <location>
        <begin position="1"/>
        <end position="362"/>
    </location>
</feature>
<feature type="modified residue" description="N5-methylglutamine" evidence="1">
    <location>
        <position position="236"/>
    </location>
</feature>
<gene>
    <name evidence="1" type="primary">prfA</name>
    <name type="ordered locus">LGAS_1248</name>
</gene>
<reference key="1">
    <citation type="journal article" date="2006" name="Proc. Natl. Acad. Sci. U.S.A.">
        <title>Comparative genomics of the lactic acid bacteria.</title>
        <authorList>
            <person name="Makarova K.S."/>
            <person name="Slesarev A."/>
            <person name="Wolf Y.I."/>
            <person name="Sorokin A."/>
            <person name="Mirkin B."/>
            <person name="Koonin E.V."/>
            <person name="Pavlov A."/>
            <person name="Pavlova N."/>
            <person name="Karamychev V."/>
            <person name="Polouchine N."/>
            <person name="Shakhova V."/>
            <person name="Grigoriev I."/>
            <person name="Lou Y."/>
            <person name="Rohksar D."/>
            <person name="Lucas S."/>
            <person name="Huang K."/>
            <person name="Goodstein D.M."/>
            <person name="Hawkins T."/>
            <person name="Plengvidhya V."/>
            <person name="Welker D."/>
            <person name="Hughes J."/>
            <person name="Goh Y."/>
            <person name="Benson A."/>
            <person name="Baldwin K."/>
            <person name="Lee J.-H."/>
            <person name="Diaz-Muniz I."/>
            <person name="Dosti B."/>
            <person name="Smeianov V."/>
            <person name="Wechter W."/>
            <person name="Barabote R."/>
            <person name="Lorca G."/>
            <person name="Altermann E."/>
            <person name="Barrangou R."/>
            <person name="Ganesan B."/>
            <person name="Xie Y."/>
            <person name="Rawsthorne H."/>
            <person name="Tamir D."/>
            <person name="Parker C."/>
            <person name="Breidt F."/>
            <person name="Broadbent J.R."/>
            <person name="Hutkins R."/>
            <person name="O'Sullivan D."/>
            <person name="Steele J."/>
            <person name="Unlu G."/>
            <person name="Saier M.H. Jr."/>
            <person name="Klaenhammer T."/>
            <person name="Richardson P."/>
            <person name="Kozyavkin S."/>
            <person name="Weimer B.C."/>
            <person name="Mills D.A."/>
        </authorList>
    </citation>
    <scope>NUCLEOTIDE SEQUENCE [LARGE SCALE GENOMIC DNA]</scope>
    <source>
        <strain>ATCC 33323 / DSM 20243 / BCRC 14619 / CIP 102991 / JCM 1131 / KCTC 3163 / NCIMB 11718 / NCTC 13722 / AM63</strain>
    </source>
</reference>
<protein>
    <recommendedName>
        <fullName evidence="1">Peptide chain release factor 1</fullName>
        <shortName evidence="1">RF-1</shortName>
    </recommendedName>
</protein>
<sequence>MDKVMAQLEGLVAHYEELQEMMADPEVINDTKRYMEISKEEADMREVVQKYRKYKSDIKEIDDNKEIISSESDDDLVEMAKEENSELEKEVAKLEDEIKILMLPKDPNDDKDIIMEIRGAAGGDEASLFAGDLLRMYEKYAETQGWKVSLIDSEPTEVGGYKRVAVMITGDKVYSKLKYENGAHRVQRVPVTESQGRVHTSTATVAVMPEYEQVDIDLDPKDIRVDVYRSSGAGGQHINKTSSAVRMTHLPTGIVVAMQDQRSQQQNREKAMQILKSRVYDYYESQNRDKYDAKRKDAVGTGDRSERIRTYNYPQNRVTDHRIGLTLNKLDRVMNGELDEIINALVLYYQTQQLEKMAEENA</sequence>
<evidence type="ECO:0000255" key="1">
    <source>
        <dbReference type="HAMAP-Rule" id="MF_00093"/>
    </source>
</evidence>
<dbReference type="EMBL" id="CP000413">
    <property type="protein sequence ID" value="ABJ60617.1"/>
    <property type="molecule type" value="Genomic_DNA"/>
</dbReference>
<dbReference type="RefSeq" id="WP_003647063.1">
    <property type="nucleotide sequence ID" value="NZ_WBMG01000002.1"/>
</dbReference>
<dbReference type="SMR" id="Q042K5"/>
<dbReference type="GeneID" id="29640125"/>
<dbReference type="KEGG" id="lga:LGAS_1248"/>
<dbReference type="HOGENOM" id="CLU_036856_0_1_9"/>
<dbReference type="BioCyc" id="LGAS324831:G1G6Y-1244-MONOMER"/>
<dbReference type="Proteomes" id="UP000000664">
    <property type="component" value="Chromosome"/>
</dbReference>
<dbReference type="GO" id="GO:0005737">
    <property type="term" value="C:cytoplasm"/>
    <property type="evidence" value="ECO:0007669"/>
    <property type="project" value="UniProtKB-SubCell"/>
</dbReference>
<dbReference type="GO" id="GO:0016149">
    <property type="term" value="F:translation release factor activity, codon specific"/>
    <property type="evidence" value="ECO:0007669"/>
    <property type="project" value="UniProtKB-UniRule"/>
</dbReference>
<dbReference type="FunFam" id="3.30.160.20:FF:000004">
    <property type="entry name" value="Peptide chain release factor 1"/>
    <property type="match status" value="1"/>
</dbReference>
<dbReference type="FunFam" id="3.30.70.1660:FF:000002">
    <property type="entry name" value="Peptide chain release factor 1"/>
    <property type="match status" value="1"/>
</dbReference>
<dbReference type="FunFam" id="3.30.70.1660:FF:000004">
    <property type="entry name" value="Peptide chain release factor 1"/>
    <property type="match status" value="1"/>
</dbReference>
<dbReference type="Gene3D" id="3.30.160.20">
    <property type="match status" value="1"/>
</dbReference>
<dbReference type="Gene3D" id="3.30.70.1660">
    <property type="match status" value="1"/>
</dbReference>
<dbReference type="Gene3D" id="6.10.140.1950">
    <property type="match status" value="1"/>
</dbReference>
<dbReference type="HAMAP" id="MF_00093">
    <property type="entry name" value="Rel_fac_1"/>
    <property type="match status" value="1"/>
</dbReference>
<dbReference type="InterPro" id="IPR005139">
    <property type="entry name" value="PCRF"/>
</dbReference>
<dbReference type="InterPro" id="IPR000352">
    <property type="entry name" value="Pep_chain_release_fac_I"/>
</dbReference>
<dbReference type="InterPro" id="IPR045853">
    <property type="entry name" value="Pep_chain_release_fac_I_sf"/>
</dbReference>
<dbReference type="InterPro" id="IPR050057">
    <property type="entry name" value="Prokaryotic/Mito_RF"/>
</dbReference>
<dbReference type="InterPro" id="IPR004373">
    <property type="entry name" value="RF-1"/>
</dbReference>
<dbReference type="NCBIfam" id="TIGR00019">
    <property type="entry name" value="prfA"/>
    <property type="match status" value="1"/>
</dbReference>
<dbReference type="NCBIfam" id="NF001859">
    <property type="entry name" value="PRK00591.1"/>
    <property type="match status" value="1"/>
</dbReference>
<dbReference type="PANTHER" id="PTHR43804">
    <property type="entry name" value="LD18447P"/>
    <property type="match status" value="1"/>
</dbReference>
<dbReference type="PANTHER" id="PTHR43804:SF7">
    <property type="entry name" value="LD18447P"/>
    <property type="match status" value="1"/>
</dbReference>
<dbReference type="Pfam" id="PF03462">
    <property type="entry name" value="PCRF"/>
    <property type="match status" value="1"/>
</dbReference>
<dbReference type="Pfam" id="PF00472">
    <property type="entry name" value="RF-1"/>
    <property type="match status" value="1"/>
</dbReference>
<dbReference type="SMART" id="SM00937">
    <property type="entry name" value="PCRF"/>
    <property type="match status" value="1"/>
</dbReference>
<dbReference type="SUPFAM" id="SSF75620">
    <property type="entry name" value="Release factor"/>
    <property type="match status" value="1"/>
</dbReference>
<dbReference type="PROSITE" id="PS00745">
    <property type="entry name" value="RF_PROK_I"/>
    <property type="match status" value="1"/>
</dbReference>